<accession>Q5SSZ7</accession>
<accession>B2RXA5</accession>
<accession>Q3V095</accession>
<comment type="function">
    <text evidence="2 7 8">E3 ubiquitin-protein ligase that acts as a negative regulator of the Wnt signaling pathway by mediating the ubiquitination and subsequent degradation of Wnt receptor complex components Frizzled and LRP6. Acts on both canonical and non-canonical Wnt signaling pathway. Acts as a tumor suppressor in the intestinal stem cell zone by inhibiting the Wnt signaling pathway, thereby restricting the size of the intestinal stem cell zone (PubMed:22575959, PubMed:22895187). Along with RSPO2 and RNF43, constitutes a master switch that governs limb specification (By similarity).</text>
</comment>
<comment type="catalytic activity">
    <reaction>
        <text>S-ubiquitinyl-[E2 ubiquitin-conjugating enzyme]-L-cysteine + [acceptor protein]-L-lysine = [E2 ubiquitin-conjugating enzyme]-L-cysteine + N(6)-ubiquitinyl-[acceptor protein]-L-lysine.</text>
        <dbReference type="EC" id="2.3.2.27"/>
    </reaction>
</comment>
<comment type="activity regulation">
    <text evidence="1">Negatively regulated by R-spondin proteins such as RSPO1: interaction with RSPO1 induces the indirect association between ZNRF3 and LGR4, promoting membrane clearance of ZNRF3.</text>
</comment>
<comment type="pathway">
    <text>Protein modification; protein ubiquitination.</text>
</comment>
<comment type="subunit">
    <text evidence="3 10">Interacts with LRP6, FZD4, FZD5, FZD6 and FZD8 (By similarity). Interacts with RSPO1; interaction promotes indirect interaction with LGR4 and membrane clearance of ZNRF3 (By similarity). Interacts with LMBR1L (PubMed:31073040).</text>
</comment>
<comment type="interaction">
    <interactant intactId="EBI-21993315">
        <id>Q5SSZ7</id>
    </interactant>
    <interactant intactId="EBI-10045219">
        <id>Q2MKA7</id>
        <label>RSPO1</label>
    </interactant>
    <organismsDiffer>true</organismsDiffer>
    <experiments>3</experiments>
</comment>
<comment type="subcellular location">
    <subcellularLocation>
        <location evidence="3">Cell membrane</location>
        <topology evidence="4">Single-pass type I membrane protein</topology>
    </subcellularLocation>
</comment>
<comment type="alternative products">
    <event type="alternative splicing"/>
    <isoform>
        <id>Q5SSZ7-1</id>
        <name>1</name>
        <sequence type="displayed"/>
    </isoform>
    <isoform>
        <id>Q5SSZ7-2</id>
        <name>2</name>
        <sequence type="described" ref="VSP_023089 VSP_023090 VSP_023091"/>
    </isoform>
</comment>
<comment type="developmental stage">
    <text evidence="9">During limb development, at 14.5 dpc, ubiquitously expressed in the limb bud. In developing lungs, at 14.5 dpc, ubiquitously expressed.</text>
</comment>
<comment type="disruption phenotype">
    <text evidence="7 8">Embryos die around birth due to activation of Wnt signaling pathway. Embryos display a lack of lens formation due to Wnt activation. Conditional knockout mice lacking both Rnf43 and Znrf3 in intestine show a marked expansion of the proliferative compartment, resembling the effects of acute deletion of Apc.</text>
</comment>
<comment type="similarity">
    <text evidence="13">Belongs to the ZNRF3 family.</text>
</comment>
<comment type="sequence caution" evidence="13">
    <conflict type="erroneous initiation">
        <sequence resource="EMBL-CDS" id="AAI51081"/>
    </conflict>
    <text>Truncated N-terminus.</text>
</comment>
<comment type="sequence caution" evidence="13">
    <conflict type="erroneous initiation">
        <sequence resource="EMBL-CDS" id="AAI51084"/>
    </conflict>
    <text>Truncated N-terminus.</text>
</comment>
<evidence type="ECO:0000250" key="1"/>
<evidence type="ECO:0000250" key="2">
    <source>
        <dbReference type="UniProtKB" id="Q08D68"/>
    </source>
</evidence>
<evidence type="ECO:0000250" key="3">
    <source>
        <dbReference type="UniProtKB" id="Q9ULT6"/>
    </source>
</evidence>
<evidence type="ECO:0000255" key="4"/>
<evidence type="ECO:0000255" key="5">
    <source>
        <dbReference type="PROSITE-ProRule" id="PRU00175"/>
    </source>
</evidence>
<evidence type="ECO:0000256" key="6">
    <source>
        <dbReference type="SAM" id="MobiDB-lite"/>
    </source>
</evidence>
<evidence type="ECO:0000269" key="7">
    <source>
    </source>
</evidence>
<evidence type="ECO:0000269" key="8">
    <source>
    </source>
</evidence>
<evidence type="ECO:0000269" key="9">
    <source>
    </source>
</evidence>
<evidence type="ECO:0000269" key="10">
    <source>
    </source>
</evidence>
<evidence type="ECO:0000303" key="11">
    <source>
    </source>
</evidence>
<evidence type="ECO:0000303" key="12">
    <source>
    </source>
</evidence>
<evidence type="ECO:0000305" key="13"/>
<evidence type="ECO:0007829" key="14">
    <source>
        <dbReference type="PDB" id="4C86"/>
    </source>
</evidence>
<evidence type="ECO:0007829" key="15">
    <source>
        <dbReference type="PDB" id="4C8A"/>
    </source>
</evidence>
<evidence type="ECO:0007829" key="16">
    <source>
        <dbReference type="PDB" id="4CDJ"/>
    </source>
</evidence>
<organism>
    <name type="scientific">Mus musculus</name>
    <name type="common">Mouse</name>
    <dbReference type="NCBI Taxonomy" id="10090"/>
    <lineage>
        <taxon>Eukaryota</taxon>
        <taxon>Metazoa</taxon>
        <taxon>Chordata</taxon>
        <taxon>Craniata</taxon>
        <taxon>Vertebrata</taxon>
        <taxon>Euteleostomi</taxon>
        <taxon>Mammalia</taxon>
        <taxon>Eutheria</taxon>
        <taxon>Euarchontoglires</taxon>
        <taxon>Glires</taxon>
        <taxon>Rodentia</taxon>
        <taxon>Myomorpha</taxon>
        <taxon>Muroidea</taxon>
        <taxon>Muridae</taxon>
        <taxon>Murinae</taxon>
        <taxon>Mus</taxon>
        <taxon>Mus</taxon>
    </lineage>
</organism>
<reference key="1">
    <citation type="journal article" date="2005" name="Science">
        <title>The transcriptional landscape of the mammalian genome.</title>
        <authorList>
            <person name="Carninci P."/>
            <person name="Kasukawa T."/>
            <person name="Katayama S."/>
            <person name="Gough J."/>
            <person name="Frith M.C."/>
            <person name="Maeda N."/>
            <person name="Oyama R."/>
            <person name="Ravasi T."/>
            <person name="Lenhard B."/>
            <person name="Wells C."/>
            <person name="Kodzius R."/>
            <person name="Shimokawa K."/>
            <person name="Bajic V.B."/>
            <person name="Brenner S.E."/>
            <person name="Batalov S."/>
            <person name="Forrest A.R."/>
            <person name="Zavolan M."/>
            <person name="Davis M.J."/>
            <person name="Wilming L.G."/>
            <person name="Aidinis V."/>
            <person name="Allen J.E."/>
            <person name="Ambesi-Impiombato A."/>
            <person name="Apweiler R."/>
            <person name="Aturaliya R.N."/>
            <person name="Bailey T.L."/>
            <person name="Bansal M."/>
            <person name="Baxter L."/>
            <person name="Beisel K.W."/>
            <person name="Bersano T."/>
            <person name="Bono H."/>
            <person name="Chalk A.M."/>
            <person name="Chiu K.P."/>
            <person name="Choudhary V."/>
            <person name="Christoffels A."/>
            <person name="Clutterbuck D.R."/>
            <person name="Crowe M.L."/>
            <person name="Dalla E."/>
            <person name="Dalrymple B.P."/>
            <person name="de Bono B."/>
            <person name="Della Gatta G."/>
            <person name="di Bernardo D."/>
            <person name="Down T."/>
            <person name="Engstrom P."/>
            <person name="Fagiolini M."/>
            <person name="Faulkner G."/>
            <person name="Fletcher C.F."/>
            <person name="Fukushima T."/>
            <person name="Furuno M."/>
            <person name="Futaki S."/>
            <person name="Gariboldi M."/>
            <person name="Georgii-Hemming P."/>
            <person name="Gingeras T.R."/>
            <person name="Gojobori T."/>
            <person name="Green R.E."/>
            <person name="Gustincich S."/>
            <person name="Harbers M."/>
            <person name="Hayashi Y."/>
            <person name="Hensch T.K."/>
            <person name="Hirokawa N."/>
            <person name="Hill D."/>
            <person name="Huminiecki L."/>
            <person name="Iacono M."/>
            <person name="Ikeo K."/>
            <person name="Iwama A."/>
            <person name="Ishikawa T."/>
            <person name="Jakt M."/>
            <person name="Kanapin A."/>
            <person name="Katoh M."/>
            <person name="Kawasawa Y."/>
            <person name="Kelso J."/>
            <person name="Kitamura H."/>
            <person name="Kitano H."/>
            <person name="Kollias G."/>
            <person name="Krishnan S.P."/>
            <person name="Kruger A."/>
            <person name="Kummerfeld S.K."/>
            <person name="Kurochkin I.V."/>
            <person name="Lareau L.F."/>
            <person name="Lazarevic D."/>
            <person name="Lipovich L."/>
            <person name="Liu J."/>
            <person name="Liuni S."/>
            <person name="McWilliam S."/>
            <person name="Madan Babu M."/>
            <person name="Madera M."/>
            <person name="Marchionni L."/>
            <person name="Matsuda H."/>
            <person name="Matsuzawa S."/>
            <person name="Miki H."/>
            <person name="Mignone F."/>
            <person name="Miyake S."/>
            <person name="Morris K."/>
            <person name="Mottagui-Tabar S."/>
            <person name="Mulder N."/>
            <person name="Nakano N."/>
            <person name="Nakauchi H."/>
            <person name="Ng P."/>
            <person name="Nilsson R."/>
            <person name="Nishiguchi S."/>
            <person name="Nishikawa S."/>
            <person name="Nori F."/>
            <person name="Ohara O."/>
            <person name="Okazaki Y."/>
            <person name="Orlando V."/>
            <person name="Pang K.C."/>
            <person name="Pavan W.J."/>
            <person name="Pavesi G."/>
            <person name="Pesole G."/>
            <person name="Petrovsky N."/>
            <person name="Piazza S."/>
            <person name="Reed J."/>
            <person name="Reid J.F."/>
            <person name="Ring B.Z."/>
            <person name="Ringwald M."/>
            <person name="Rost B."/>
            <person name="Ruan Y."/>
            <person name="Salzberg S.L."/>
            <person name="Sandelin A."/>
            <person name="Schneider C."/>
            <person name="Schoenbach C."/>
            <person name="Sekiguchi K."/>
            <person name="Semple C.A."/>
            <person name="Seno S."/>
            <person name="Sessa L."/>
            <person name="Sheng Y."/>
            <person name="Shibata Y."/>
            <person name="Shimada H."/>
            <person name="Shimada K."/>
            <person name="Silva D."/>
            <person name="Sinclair B."/>
            <person name="Sperling S."/>
            <person name="Stupka E."/>
            <person name="Sugiura K."/>
            <person name="Sultana R."/>
            <person name="Takenaka Y."/>
            <person name="Taki K."/>
            <person name="Tammoja K."/>
            <person name="Tan S.L."/>
            <person name="Tang S."/>
            <person name="Taylor M.S."/>
            <person name="Tegner J."/>
            <person name="Teichmann S.A."/>
            <person name="Ueda H.R."/>
            <person name="van Nimwegen E."/>
            <person name="Verardo R."/>
            <person name="Wei C.L."/>
            <person name="Yagi K."/>
            <person name="Yamanishi H."/>
            <person name="Zabarovsky E."/>
            <person name="Zhu S."/>
            <person name="Zimmer A."/>
            <person name="Hide W."/>
            <person name="Bult C."/>
            <person name="Grimmond S.M."/>
            <person name="Teasdale R.D."/>
            <person name="Liu E.T."/>
            <person name="Brusic V."/>
            <person name="Quackenbush J."/>
            <person name="Wahlestedt C."/>
            <person name="Mattick J.S."/>
            <person name="Hume D.A."/>
            <person name="Kai C."/>
            <person name="Sasaki D."/>
            <person name="Tomaru Y."/>
            <person name="Fukuda S."/>
            <person name="Kanamori-Katayama M."/>
            <person name="Suzuki M."/>
            <person name="Aoki J."/>
            <person name="Arakawa T."/>
            <person name="Iida J."/>
            <person name="Imamura K."/>
            <person name="Itoh M."/>
            <person name="Kato T."/>
            <person name="Kawaji H."/>
            <person name="Kawagashira N."/>
            <person name="Kawashima T."/>
            <person name="Kojima M."/>
            <person name="Kondo S."/>
            <person name="Konno H."/>
            <person name="Nakano K."/>
            <person name="Ninomiya N."/>
            <person name="Nishio T."/>
            <person name="Okada M."/>
            <person name="Plessy C."/>
            <person name="Shibata K."/>
            <person name="Shiraki T."/>
            <person name="Suzuki S."/>
            <person name="Tagami M."/>
            <person name="Waki K."/>
            <person name="Watahiki A."/>
            <person name="Okamura-Oho Y."/>
            <person name="Suzuki H."/>
            <person name="Kawai J."/>
            <person name="Hayashizaki Y."/>
        </authorList>
    </citation>
    <scope>NUCLEOTIDE SEQUENCE [LARGE SCALE MRNA] (ISOFORM 2)</scope>
    <source>
        <strain>C57BL/6J</strain>
        <tissue>Testis</tissue>
    </source>
</reference>
<reference key="2">
    <citation type="journal article" date="2009" name="PLoS Biol.">
        <title>Lineage-specific biology revealed by a finished genome assembly of the mouse.</title>
        <authorList>
            <person name="Church D.M."/>
            <person name="Goodstadt L."/>
            <person name="Hillier L.W."/>
            <person name="Zody M.C."/>
            <person name="Goldstein S."/>
            <person name="She X."/>
            <person name="Bult C.J."/>
            <person name="Agarwala R."/>
            <person name="Cherry J.L."/>
            <person name="DiCuccio M."/>
            <person name="Hlavina W."/>
            <person name="Kapustin Y."/>
            <person name="Meric P."/>
            <person name="Maglott D."/>
            <person name="Birtle Z."/>
            <person name="Marques A.C."/>
            <person name="Graves T."/>
            <person name="Zhou S."/>
            <person name="Teague B."/>
            <person name="Potamousis K."/>
            <person name="Churas C."/>
            <person name="Place M."/>
            <person name="Herschleb J."/>
            <person name="Runnheim R."/>
            <person name="Forrest D."/>
            <person name="Amos-Landgraf J."/>
            <person name="Schwartz D.C."/>
            <person name="Cheng Z."/>
            <person name="Lindblad-Toh K."/>
            <person name="Eichler E.E."/>
            <person name="Ponting C.P."/>
        </authorList>
    </citation>
    <scope>NUCLEOTIDE SEQUENCE [LARGE SCALE GENOMIC DNA]</scope>
    <source>
        <strain>C57BL/6J</strain>
    </source>
</reference>
<reference key="3">
    <citation type="journal article" date="2004" name="Genome Res.">
        <title>The status, quality, and expansion of the NIH full-length cDNA project: the Mammalian Gene Collection (MGC).</title>
        <authorList>
            <consortium name="The MGC Project Team"/>
        </authorList>
    </citation>
    <scope>NUCLEOTIDE SEQUENCE [LARGE SCALE MRNA] (ISOFORM 2)</scope>
    <source>
        <tissue>Brain</tissue>
    </source>
</reference>
<reference key="4">
    <citation type="journal article" date="2012" name="Nature">
        <title>ZNRF3 promotes Wnt receptor turnover in an R-spondin-sensitive manner.</title>
        <authorList>
            <person name="Hao H.X."/>
            <person name="Xie Y."/>
            <person name="Zhang Y."/>
            <person name="Charlat O."/>
            <person name="Oster E."/>
            <person name="Avello M."/>
            <person name="Lei H."/>
            <person name="Mickanin C."/>
            <person name="Liu D."/>
            <person name="Ruffner H."/>
            <person name="Mao X."/>
            <person name="Ma Q."/>
            <person name="Zamponi R."/>
            <person name="Bouwmeester T."/>
            <person name="Finan P.M."/>
            <person name="Kirschner M.W."/>
            <person name="Porter J.A."/>
            <person name="Serluca F.C."/>
            <person name="Cong F."/>
        </authorList>
    </citation>
    <scope>FUNCTION</scope>
    <scope>DISRUPTION PHENOTYPE</scope>
</reference>
<reference key="5">
    <citation type="journal article" date="2012" name="Nature">
        <title>Tumour suppressor RNF43 is a stem-cell E3 ligase that induces endocytosis of Wnt receptors.</title>
        <authorList>
            <person name="Koo B.K."/>
            <person name="Spit M."/>
            <person name="Jordens I."/>
            <person name="Low T.Y."/>
            <person name="Stange D.E."/>
            <person name="van de Wetering M."/>
            <person name="van Es J.H."/>
            <person name="Mohammed S."/>
            <person name="Heck A.J."/>
            <person name="Maurice M.M."/>
            <person name="Clevers H."/>
        </authorList>
    </citation>
    <scope>FUNCTION</scope>
    <scope>DISRUPTION PHENOTYPE</scope>
</reference>
<reference key="6">
    <citation type="journal article" date="2018" name="Nature">
        <title>RSPO2 inhibition of RNF43 and ZNRF3 governs limb development independently of LGR4/5/6.</title>
        <authorList>
            <person name="Szenker-Ravi E."/>
            <person name="Altunoglu U."/>
            <person name="Leushacke M."/>
            <person name="Bosso-Lefevre C."/>
            <person name="Khatoo M."/>
            <person name="Thi Tran H."/>
            <person name="Naert T."/>
            <person name="Noelanders R."/>
            <person name="Hajamohideen A."/>
            <person name="Beneteau C."/>
            <person name="de Sousa S.B."/>
            <person name="Karaman B."/>
            <person name="Latypova X."/>
            <person name="Basaran S."/>
            <person name="Yuecel E.B."/>
            <person name="Tan T.T."/>
            <person name="Vlaminck L."/>
            <person name="Nayak S.S."/>
            <person name="Shukla A."/>
            <person name="Girisha K.M."/>
            <person name="Le Caignec C."/>
            <person name="Soshnikova N."/>
            <person name="Uyguner Z.O."/>
            <person name="Vleminckx K."/>
            <person name="Barker N."/>
            <person name="Kayserili H."/>
            <person name="Reversade B."/>
        </authorList>
    </citation>
    <scope>DEVELOPMENTAL STAGE</scope>
</reference>
<reference key="7">
    <citation type="journal article" date="2019" name="Science">
        <title>LMBR1L regulates lymphopoiesis through Wnt/beta-catenin signaling.</title>
        <authorList>
            <person name="Choi J.H."/>
            <person name="Zhong X."/>
            <person name="McAlpine W."/>
            <person name="Liao T.C."/>
            <person name="Zhang D."/>
            <person name="Fang B."/>
            <person name="Russell J."/>
            <person name="Ludwig S."/>
            <person name="Nair-Gill E."/>
            <person name="Zhang Z."/>
            <person name="Wang K.W."/>
            <person name="Misawa T."/>
            <person name="Zhan X."/>
            <person name="Choi M."/>
            <person name="Wang T."/>
            <person name="Li X."/>
            <person name="Tang M."/>
            <person name="Sun Q."/>
            <person name="Yu L."/>
            <person name="Murray A.R."/>
            <person name="Moresco E.M.Y."/>
            <person name="Beutler B."/>
        </authorList>
    </citation>
    <scope>INTERACTION WITH LMBR1L</scope>
</reference>
<proteinExistence type="evidence at protein level"/>
<sequence length="913" mass="98967">MRPRSGGRPGAPGRRRRRLRRGPRGRRLPPPPPLPLLLGLLLAAAGPGAARAKETAFVEVVLFESSPSGDYTTHTTGLTGRFSRAGAMLSAEGEIVQMHPLGLCNNNDEEDLYEYGWVGVVKLEQPELDPKPCLTVLGKAKRAVQRGATAVIFDVSENPEAIDQLNQGSEDPLKRPVVYVKGADAIKLMNIVNKQKVARARIQHLPPRQPTEYFDMGIFLAFFVVVSLVCLILLVKIKLKQRRSQNSMNRLAVQALEKMETRKFNSKSKGRREGSCGALDTLSSGSTSDCAICLEKYIDGEELRVIPCTHRFHRKCVDPWLLQHHTCPHCRHNIIEQKGNPGAVCVETSNLTRGRQPRVTLPVHYPGRVHRTNAIPAYPTRTSMDSHGNPVTLLTMDRHGEQNLYSPQTPTYVRGYPPLHLDHTLAPHRCSLEHRAYSPAHPFRRPKFSSRSFSKAACFSQYETMYQHYYFQGLSYPEQEGQTIPSVTPRGQSRAFPPSGASSLLFPTMVHVAPPTHVESGSTSSFSCYHGHRSVCSGYLADCPGSDSSSNSSGQCRCSSSDSVVDCTEVSNQGVYGSCSTFRSSLSSDYDPFIYRSRGPAVHLEGSPPPEELPAGHSQSAGRGEPWLGPASPSGDQLSTCSLEMNYSSNSSLEPRGPNSSTSEVGLEVSPGAALDLRRTWKGGPEGPSCACCFEPQPFPPGSGIETSAGGSSLFLGPRLLEDCNPPSGEPQLGSSQGLYGLHSDHYPRTDGVKYEGLPCCFYEEKQVAHSAGRGNGCYTEDYSVSVQYTLTEEPPPSCYAGPRDLSQRIPIIPEDVDCDLGLPQDCHGMHNHSPWGGALSLDVPRLHWSLGTTREEEQAPCYQAEVQPGCSPEEAGASRASLSSAPQDTQESHALAAEASGPGSGPGIGTGA</sequence>
<keyword id="KW-0002">3D-structure</keyword>
<keyword id="KW-0025">Alternative splicing</keyword>
<keyword id="KW-1003">Cell membrane</keyword>
<keyword id="KW-0217">Developmental protein</keyword>
<keyword id="KW-0472">Membrane</keyword>
<keyword id="KW-0479">Metal-binding</keyword>
<keyword id="KW-1185">Reference proteome</keyword>
<keyword id="KW-0732">Signal</keyword>
<keyword id="KW-0808">Transferase</keyword>
<keyword id="KW-0812">Transmembrane</keyword>
<keyword id="KW-1133">Transmembrane helix</keyword>
<keyword id="KW-0833">Ubl conjugation pathway</keyword>
<keyword id="KW-0879">Wnt signaling pathway</keyword>
<keyword id="KW-0862">Zinc</keyword>
<keyword id="KW-0863">Zinc-finger</keyword>
<dbReference type="EC" id="2.3.2.27"/>
<dbReference type="EMBL" id="AK133342">
    <property type="protein sequence ID" value="BAE21609.1"/>
    <property type="molecule type" value="mRNA"/>
</dbReference>
<dbReference type="EMBL" id="AL662853">
    <property type="status" value="NOT_ANNOTATED_CDS"/>
    <property type="molecule type" value="Genomic_DNA"/>
</dbReference>
<dbReference type="EMBL" id="AL662876">
    <property type="status" value="NOT_ANNOTATED_CDS"/>
    <property type="molecule type" value="Genomic_DNA"/>
</dbReference>
<dbReference type="EMBL" id="BC151080">
    <property type="protein sequence ID" value="AAI51081.1"/>
    <property type="status" value="ALT_INIT"/>
    <property type="molecule type" value="mRNA"/>
</dbReference>
<dbReference type="EMBL" id="BC151083">
    <property type="protein sequence ID" value="AAI51084.1"/>
    <property type="status" value="ALT_INIT"/>
    <property type="molecule type" value="mRNA"/>
</dbReference>
<dbReference type="CCDS" id="CCDS36102.1">
    <molecule id="Q5SSZ7-1"/>
</dbReference>
<dbReference type="CCDS" id="CCDS70134.1">
    <molecule id="Q5SSZ7-2"/>
</dbReference>
<dbReference type="RefSeq" id="NP_001074393.1">
    <molecule id="Q5SSZ7-1"/>
    <property type="nucleotide sequence ID" value="NM_001080924.2"/>
</dbReference>
<dbReference type="RefSeq" id="NP_001277430.1">
    <molecule id="Q5SSZ7-2"/>
    <property type="nucleotide sequence ID" value="NM_001290501.1"/>
</dbReference>
<dbReference type="PDB" id="4C86">
    <property type="method" value="X-ray"/>
    <property type="resolution" value="2.00 A"/>
    <property type="chains" value="A/B=53-205"/>
</dbReference>
<dbReference type="PDB" id="4C8A">
    <property type="method" value="X-ray"/>
    <property type="resolution" value="2.70 A"/>
    <property type="chains" value="A/B/C=53-205"/>
</dbReference>
<dbReference type="PDB" id="4C8C">
    <property type="method" value="X-ray"/>
    <property type="resolution" value="2.40 A"/>
    <property type="chains" value="A/B=53-205"/>
</dbReference>
<dbReference type="PDB" id="4C8F">
    <property type="method" value="X-ray"/>
    <property type="resolution" value="2.69 A"/>
    <property type="chains" value="A/B/C/D=53-205"/>
</dbReference>
<dbReference type="PDB" id="4C8P">
    <property type="method" value="X-ray"/>
    <property type="resolution" value="2.10 A"/>
    <property type="chains" value="A=53-205"/>
</dbReference>
<dbReference type="PDB" id="4C99">
    <property type="method" value="X-ray"/>
    <property type="resolution" value="2.80 A"/>
    <property type="chains" value="A/C=53-205"/>
</dbReference>
<dbReference type="PDB" id="4C9A">
    <property type="method" value="X-ray"/>
    <property type="resolution" value="2.40 A"/>
    <property type="chains" value="A/C=53-205"/>
</dbReference>
<dbReference type="PDB" id="4C9E">
    <property type="method" value="X-ray"/>
    <property type="resolution" value="3.00 A"/>
    <property type="chains" value="A/C/E/G=53-205"/>
</dbReference>
<dbReference type="PDB" id="4CDJ">
    <property type="method" value="X-ray"/>
    <property type="resolution" value="1.50 A"/>
    <property type="chains" value="A/B=53-205"/>
</dbReference>
<dbReference type="PDB" id="4CDK">
    <property type="method" value="X-ray"/>
    <property type="resolution" value="2.80 A"/>
    <property type="chains" value="A/B/C/D=53-205"/>
</dbReference>
<dbReference type="PDB" id="4UFS">
    <property type="method" value="X-ray"/>
    <property type="resolution" value="4.80 A"/>
    <property type="chains" value="C=53-205"/>
</dbReference>
<dbReference type="PDBsum" id="4C86"/>
<dbReference type="PDBsum" id="4C8A"/>
<dbReference type="PDBsum" id="4C8C"/>
<dbReference type="PDBsum" id="4C8F"/>
<dbReference type="PDBsum" id="4C8P"/>
<dbReference type="PDBsum" id="4C99"/>
<dbReference type="PDBsum" id="4C9A"/>
<dbReference type="PDBsum" id="4C9E"/>
<dbReference type="PDBsum" id="4CDJ"/>
<dbReference type="PDBsum" id="4CDK"/>
<dbReference type="PDBsum" id="4UFS"/>
<dbReference type="SMR" id="Q5SSZ7"/>
<dbReference type="BioGRID" id="240468">
    <property type="interactions" value="6"/>
</dbReference>
<dbReference type="CORUM" id="Q5SSZ7"/>
<dbReference type="FunCoup" id="Q5SSZ7">
    <property type="interactions" value="1406"/>
</dbReference>
<dbReference type="IntAct" id="Q5SSZ7">
    <property type="interactions" value="2"/>
</dbReference>
<dbReference type="STRING" id="10090.ENSMUSP00000105493"/>
<dbReference type="iPTMnet" id="Q5SSZ7"/>
<dbReference type="PhosphoSitePlus" id="Q5SSZ7"/>
<dbReference type="PaxDb" id="10090-ENSMUSP00000105493"/>
<dbReference type="ProteomicsDB" id="275305">
    <molecule id="Q5SSZ7-1"/>
</dbReference>
<dbReference type="ProteomicsDB" id="275306">
    <molecule id="Q5SSZ7-2"/>
</dbReference>
<dbReference type="Antibodypedia" id="48546">
    <property type="antibodies" value="82 antibodies from 16 providers"/>
</dbReference>
<dbReference type="Ensembl" id="ENSMUST00000109867.8">
    <molecule id="Q5SSZ7-1"/>
    <property type="protein sequence ID" value="ENSMUSP00000105493.2"/>
    <property type="gene ID" value="ENSMUSG00000041961.15"/>
</dbReference>
<dbReference type="Ensembl" id="ENSMUST00000172492.8">
    <molecule id="Q5SSZ7-2"/>
    <property type="protein sequence ID" value="ENSMUSP00000134698.2"/>
    <property type="gene ID" value="ENSMUSG00000041961.15"/>
</dbReference>
<dbReference type="GeneID" id="407821"/>
<dbReference type="KEGG" id="mmu:407821"/>
<dbReference type="UCSC" id="uc007hwj.2">
    <molecule id="Q5SSZ7-1"/>
    <property type="organism name" value="mouse"/>
</dbReference>
<dbReference type="UCSC" id="uc007hwk.4">
    <molecule id="Q5SSZ7-2"/>
    <property type="organism name" value="mouse"/>
</dbReference>
<dbReference type="AGR" id="MGI:3039616"/>
<dbReference type="CTD" id="84133"/>
<dbReference type="MGI" id="MGI:3039616">
    <property type="gene designation" value="Znrf3"/>
</dbReference>
<dbReference type="VEuPathDB" id="HostDB:ENSMUSG00000041961"/>
<dbReference type="eggNOG" id="KOG0800">
    <property type="taxonomic scope" value="Eukaryota"/>
</dbReference>
<dbReference type="GeneTree" id="ENSGT00940000154006"/>
<dbReference type="HOGENOM" id="CLU_018099_1_0_1"/>
<dbReference type="InParanoid" id="Q5SSZ7"/>
<dbReference type="OMA" id="FQMHPLG"/>
<dbReference type="OrthoDB" id="8062037at2759"/>
<dbReference type="PhylomeDB" id="Q5SSZ7"/>
<dbReference type="TreeFam" id="TF317074"/>
<dbReference type="Reactome" id="R-MMU-4641263">
    <property type="pathway name" value="Regulation of FZD by ubiquitination"/>
</dbReference>
<dbReference type="UniPathway" id="UPA00143"/>
<dbReference type="BioGRID-ORCS" id="407821">
    <property type="hits" value="7 hits in 78 CRISPR screens"/>
</dbReference>
<dbReference type="ChiTaRS" id="Znrf3">
    <property type="organism name" value="mouse"/>
</dbReference>
<dbReference type="EvolutionaryTrace" id="Q5SSZ7"/>
<dbReference type="PRO" id="PR:Q5SSZ7"/>
<dbReference type="Proteomes" id="UP000000589">
    <property type="component" value="Chromosome 11"/>
</dbReference>
<dbReference type="RNAct" id="Q5SSZ7">
    <property type="molecule type" value="protein"/>
</dbReference>
<dbReference type="Bgee" id="ENSMUSG00000041961">
    <property type="expression patterns" value="Expressed in otolith organ and 194 other cell types or tissues"/>
</dbReference>
<dbReference type="ExpressionAtlas" id="Q5SSZ7">
    <property type="expression patterns" value="baseline and differential"/>
</dbReference>
<dbReference type="GO" id="GO:0005886">
    <property type="term" value="C:plasma membrane"/>
    <property type="evidence" value="ECO:0000250"/>
    <property type="project" value="UniProtKB"/>
</dbReference>
<dbReference type="GO" id="GO:0005109">
    <property type="term" value="F:frizzled binding"/>
    <property type="evidence" value="ECO:0007669"/>
    <property type="project" value="Ensembl"/>
</dbReference>
<dbReference type="GO" id="GO:0004842">
    <property type="term" value="F:ubiquitin-protein transferase activity"/>
    <property type="evidence" value="ECO:0000250"/>
    <property type="project" value="UniProtKB"/>
</dbReference>
<dbReference type="GO" id="GO:0008270">
    <property type="term" value="F:zinc ion binding"/>
    <property type="evidence" value="ECO:0007669"/>
    <property type="project" value="UniProtKB-KW"/>
</dbReference>
<dbReference type="GO" id="GO:0060173">
    <property type="term" value="P:limb development"/>
    <property type="evidence" value="ECO:0000250"/>
    <property type="project" value="UniProtKB"/>
</dbReference>
<dbReference type="GO" id="GO:0090090">
    <property type="term" value="P:negative regulation of canonical Wnt signaling pathway"/>
    <property type="evidence" value="ECO:0000250"/>
    <property type="project" value="UniProtKB"/>
</dbReference>
<dbReference type="GO" id="GO:2000051">
    <property type="term" value="P:negative regulation of non-canonical Wnt signaling pathway"/>
    <property type="evidence" value="ECO:0000250"/>
    <property type="project" value="UniProtKB"/>
</dbReference>
<dbReference type="GO" id="GO:0030178">
    <property type="term" value="P:negative regulation of Wnt signaling pathway"/>
    <property type="evidence" value="ECO:0000315"/>
    <property type="project" value="UniProtKB"/>
</dbReference>
<dbReference type="GO" id="GO:0016567">
    <property type="term" value="P:protein ubiquitination"/>
    <property type="evidence" value="ECO:0000250"/>
    <property type="project" value="UniProtKB"/>
</dbReference>
<dbReference type="GO" id="GO:0060828">
    <property type="term" value="P:regulation of canonical Wnt signaling pathway"/>
    <property type="evidence" value="ECO:0000315"/>
    <property type="project" value="UniProtKB"/>
</dbReference>
<dbReference type="GO" id="GO:2000095">
    <property type="term" value="P:regulation of Wnt signaling pathway, planar cell polarity pathway"/>
    <property type="evidence" value="ECO:0000315"/>
    <property type="project" value="UniProtKB"/>
</dbReference>
<dbReference type="GO" id="GO:0072089">
    <property type="term" value="P:stem cell proliferation"/>
    <property type="evidence" value="ECO:0000315"/>
    <property type="project" value="UniProtKB"/>
</dbReference>
<dbReference type="GO" id="GO:0006511">
    <property type="term" value="P:ubiquitin-dependent protein catabolic process"/>
    <property type="evidence" value="ECO:0000250"/>
    <property type="project" value="UniProtKB"/>
</dbReference>
<dbReference type="GO" id="GO:0038018">
    <property type="term" value="P:Wnt receptor catabolic process"/>
    <property type="evidence" value="ECO:0000250"/>
    <property type="project" value="UniProtKB"/>
</dbReference>
<dbReference type="GO" id="GO:0016055">
    <property type="term" value="P:Wnt signaling pathway"/>
    <property type="evidence" value="ECO:0007669"/>
    <property type="project" value="UniProtKB-KW"/>
</dbReference>
<dbReference type="CDD" id="cd16799">
    <property type="entry name" value="RING-H2_ZNRF3"/>
    <property type="match status" value="1"/>
</dbReference>
<dbReference type="FunFam" id="3.50.30.30:FF:000018">
    <property type="entry name" value="E3 ubiquitin-protein ligase ZNRF3"/>
    <property type="match status" value="1"/>
</dbReference>
<dbReference type="FunFam" id="3.30.40.10:FF:000075">
    <property type="entry name" value="Putative e3 ubiquitin-protein ligase rnf43"/>
    <property type="match status" value="1"/>
</dbReference>
<dbReference type="Gene3D" id="3.50.30.30">
    <property type="match status" value="1"/>
</dbReference>
<dbReference type="Gene3D" id="3.30.40.10">
    <property type="entry name" value="Zinc/RING finger domain, C3HC4 (zinc finger)"/>
    <property type="match status" value="1"/>
</dbReference>
<dbReference type="InterPro" id="IPR001841">
    <property type="entry name" value="Znf_RING"/>
</dbReference>
<dbReference type="InterPro" id="IPR013083">
    <property type="entry name" value="Znf_RING/FYVE/PHD"/>
</dbReference>
<dbReference type="InterPro" id="IPR040700">
    <property type="entry name" value="ZNRF-3_ecto"/>
</dbReference>
<dbReference type="InterPro" id="IPR051073">
    <property type="entry name" value="ZNRF3_Arkadia_E3_ligases"/>
</dbReference>
<dbReference type="InterPro" id="IPR045903">
    <property type="entry name" value="ZNRF3_Znf_RING"/>
</dbReference>
<dbReference type="PANTHER" id="PTHR16200">
    <property type="entry name" value="RING ZINC FINGER"/>
    <property type="match status" value="1"/>
</dbReference>
<dbReference type="Pfam" id="PF13639">
    <property type="entry name" value="zf-RING_2"/>
    <property type="match status" value="1"/>
</dbReference>
<dbReference type="Pfam" id="PF18212">
    <property type="entry name" value="ZNRF_3_ecto"/>
    <property type="match status" value="1"/>
</dbReference>
<dbReference type="SMART" id="SM00184">
    <property type="entry name" value="RING"/>
    <property type="match status" value="1"/>
</dbReference>
<dbReference type="SUPFAM" id="SSF57850">
    <property type="entry name" value="RING/U-box"/>
    <property type="match status" value="1"/>
</dbReference>
<dbReference type="PROSITE" id="PS50089">
    <property type="entry name" value="ZF_RING_2"/>
    <property type="match status" value="1"/>
</dbReference>
<protein>
    <recommendedName>
        <fullName>E3 ubiquitin-protein ligase ZNRF3</fullName>
        <ecNumber>2.3.2.27</ecNumber>
    </recommendedName>
    <alternativeName>
        <fullName>RING-type E3 ubiquitin transferase ZNRF3</fullName>
    </alternativeName>
    <alternativeName>
        <fullName>Zinc/RING finger protein 3</fullName>
    </alternativeName>
</protein>
<feature type="signal peptide" evidence="4">
    <location>
        <begin position="1"/>
        <end position="52"/>
    </location>
</feature>
<feature type="chain" id="PRO_0000277807" description="E3 ubiquitin-protein ligase ZNRF3">
    <location>
        <begin position="53"/>
        <end position="913"/>
    </location>
</feature>
<feature type="topological domain" description="Extracellular" evidence="4">
    <location>
        <begin position="53"/>
        <end position="216"/>
    </location>
</feature>
<feature type="transmembrane region" description="Helical" evidence="4">
    <location>
        <begin position="217"/>
        <end position="237"/>
    </location>
</feature>
<feature type="topological domain" description="Cytoplasmic" evidence="4">
    <location>
        <begin position="238"/>
        <end position="913"/>
    </location>
</feature>
<feature type="zinc finger region" description="RING-type; atypical" evidence="5">
    <location>
        <begin position="290"/>
        <end position="331"/>
    </location>
</feature>
<feature type="region of interest" description="Disordered" evidence="6">
    <location>
        <begin position="1"/>
        <end position="32"/>
    </location>
</feature>
<feature type="region of interest" description="Disordered" evidence="6">
    <location>
        <begin position="601"/>
        <end position="669"/>
    </location>
</feature>
<feature type="region of interest" description="Disordered" evidence="6">
    <location>
        <begin position="855"/>
        <end position="913"/>
    </location>
</feature>
<feature type="compositionally biased region" description="Basic residues" evidence="6">
    <location>
        <begin position="13"/>
        <end position="27"/>
    </location>
</feature>
<feature type="compositionally biased region" description="Polar residues" evidence="6">
    <location>
        <begin position="634"/>
        <end position="664"/>
    </location>
</feature>
<feature type="compositionally biased region" description="Polar residues" evidence="6">
    <location>
        <begin position="881"/>
        <end position="890"/>
    </location>
</feature>
<feature type="compositionally biased region" description="Gly residues" evidence="6">
    <location>
        <begin position="903"/>
        <end position="913"/>
    </location>
</feature>
<feature type="splice variant" id="VSP_023089" description="In isoform 2." evidence="11 12">
    <location>
        <begin position="1"/>
        <end position="96"/>
    </location>
</feature>
<feature type="splice variant" id="VSP_023090" description="In isoform 2." evidence="11 12">
    <original>Q</original>
    <variation>M</variation>
    <location>
        <position position="97"/>
    </location>
</feature>
<feature type="splice variant" id="VSP_023091" description="In isoform 2." evidence="11 12">
    <original>PGSGPGIGTGA</original>
    <variation>ENR</variation>
    <location>
        <begin position="903"/>
        <end position="913"/>
    </location>
</feature>
<feature type="sequence conflict" description="In Ref. 1; BAE21609." evidence="13" ref="1">
    <original>G</original>
    <variation>W</variation>
    <location>
        <position position="683"/>
    </location>
</feature>
<feature type="sequence conflict" description="In Ref. 3; AAI51084/AAI51081." evidence="13" ref="3">
    <original>S</original>
    <variation>T</variation>
    <location>
        <position position="708"/>
    </location>
</feature>
<feature type="sequence conflict" description="In Ref. 3; AAI51084/AAI51081." evidence="13" ref="3">
    <original>S</original>
    <variation>T</variation>
    <location>
        <position position="798"/>
    </location>
</feature>
<feature type="sequence conflict" description="In Ref. 3; AAI51084/AAI51081." evidence="13" ref="3">
    <original>PGS</original>
    <variation>ENR</variation>
    <location>
        <begin position="903"/>
        <end position="905"/>
    </location>
</feature>
<feature type="strand" evidence="16">
    <location>
        <begin position="55"/>
        <end position="64"/>
    </location>
</feature>
<feature type="strand" evidence="15">
    <location>
        <begin position="67"/>
        <end position="69"/>
    </location>
</feature>
<feature type="strand" evidence="16">
    <location>
        <begin position="72"/>
        <end position="82"/>
    </location>
</feature>
<feature type="strand" evidence="16">
    <location>
        <begin position="91"/>
        <end position="97"/>
    </location>
</feature>
<feature type="helix" evidence="16">
    <location>
        <begin position="100"/>
        <end position="103"/>
    </location>
</feature>
<feature type="strand" evidence="16">
    <location>
        <begin position="104"/>
        <end position="107"/>
    </location>
</feature>
<feature type="helix" evidence="14">
    <location>
        <begin position="109"/>
        <end position="111"/>
    </location>
</feature>
<feature type="strand" evidence="16">
    <location>
        <begin position="115"/>
        <end position="122"/>
    </location>
</feature>
<feature type="helix" evidence="16">
    <location>
        <begin position="126"/>
        <end position="128"/>
    </location>
</feature>
<feature type="strand" evidence="14">
    <location>
        <begin position="129"/>
        <end position="131"/>
    </location>
</feature>
<feature type="helix" evidence="16">
    <location>
        <begin position="136"/>
        <end position="145"/>
    </location>
</feature>
<feature type="strand" evidence="16">
    <location>
        <begin position="148"/>
        <end position="154"/>
    </location>
</feature>
<feature type="helix" evidence="16">
    <location>
        <begin position="161"/>
        <end position="165"/>
    </location>
</feature>
<feature type="turn" evidence="14">
    <location>
        <begin position="167"/>
        <end position="170"/>
    </location>
</feature>
<feature type="strand" evidence="14">
    <location>
        <begin position="173"/>
        <end position="175"/>
    </location>
</feature>
<feature type="strand" evidence="16">
    <location>
        <begin position="177"/>
        <end position="180"/>
    </location>
</feature>
<feature type="helix" evidence="16">
    <location>
        <begin position="182"/>
        <end position="192"/>
    </location>
</feature>
<feature type="strand" evidence="16">
    <location>
        <begin position="194"/>
        <end position="196"/>
    </location>
</feature>
<feature type="strand" evidence="16">
    <location>
        <begin position="198"/>
        <end position="204"/>
    </location>
</feature>
<name>ZNRF3_MOUSE</name>
<gene>
    <name type="primary">Znrf3</name>
</gene>